<proteinExistence type="inferred from homology"/>
<feature type="initiator methionine" description="Removed" evidence="1">
    <location>
        <position position="1"/>
    </location>
</feature>
<feature type="chain" id="PRO_0000166314" description="FMN-dependent NADH:quinone oxidoreductase">
    <location>
        <begin position="2"/>
        <end position="200"/>
    </location>
</feature>
<feature type="binding site" evidence="2">
    <location>
        <position position="10"/>
    </location>
    <ligand>
        <name>FMN</name>
        <dbReference type="ChEBI" id="CHEBI:58210"/>
    </ligand>
</feature>
<feature type="binding site" evidence="2">
    <location>
        <begin position="96"/>
        <end position="99"/>
    </location>
    <ligand>
        <name>FMN</name>
        <dbReference type="ChEBI" id="CHEBI:58210"/>
    </ligand>
</feature>
<feature type="binding site" evidence="2">
    <location>
        <begin position="140"/>
        <end position="143"/>
    </location>
    <ligand>
        <name>FMN</name>
        <dbReference type="ChEBI" id="CHEBI:58210"/>
    </ligand>
</feature>
<comment type="function">
    <text evidence="2">Quinone reductase that provides resistance to thiol-specific stress caused by electrophilic quinones.</text>
</comment>
<comment type="function">
    <text evidence="2">Also exhibits azoreductase activity. Catalyzes the reductive cleavage of the azo bond in aromatic azo compounds to the corresponding amines.</text>
</comment>
<comment type="catalytic activity">
    <reaction evidence="2">
        <text>2 a quinone + NADH + H(+) = 2 a 1,4-benzosemiquinone + NAD(+)</text>
        <dbReference type="Rhea" id="RHEA:65952"/>
        <dbReference type="ChEBI" id="CHEBI:15378"/>
        <dbReference type="ChEBI" id="CHEBI:57540"/>
        <dbReference type="ChEBI" id="CHEBI:57945"/>
        <dbReference type="ChEBI" id="CHEBI:132124"/>
        <dbReference type="ChEBI" id="CHEBI:134225"/>
    </reaction>
</comment>
<comment type="catalytic activity">
    <reaction evidence="2">
        <text>N,N-dimethyl-1,4-phenylenediamine + anthranilate + 2 NAD(+) = 2-(4-dimethylaminophenyl)diazenylbenzoate + 2 NADH + 2 H(+)</text>
        <dbReference type="Rhea" id="RHEA:55872"/>
        <dbReference type="ChEBI" id="CHEBI:15378"/>
        <dbReference type="ChEBI" id="CHEBI:15783"/>
        <dbReference type="ChEBI" id="CHEBI:16567"/>
        <dbReference type="ChEBI" id="CHEBI:57540"/>
        <dbReference type="ChEBI" id="CHEBI:57945"/>
        <dbReference type="ChEBI" id="CHEBI:71579"/>
        <dbReference type="EC" id="1.7.1.17"/>
    </reaction>
</comment>
<comment type="cofactor">
    <cofactor evidence="2">
        <name>FMN</name>
        <dbReference type="ChEBI" id="CHEBI:58210"/>
    </cofactor>
    <text evidence="2">Binds 1 FMN per subunit.</text>
</comment>
<comment type="subunit">
    <text evidence="2">Homodimer.</text>
</comment>
<comment type="similarity">
    <text evidence="2">Belongs to the azoreductase type 1 family.</text>
</comment>
<protein>
    <recommendedName>
        <fullName evidence="2">FMN-dependent NADH:quinone oxidoreductase</fullName>
        <ecNumber evidence="2">1.6.5.-</ecNumber>
    </recommendedName>
    <alternativeName>
        <fullName evidence="2">Azo-dye reductase</fullName>
    </alternativeName>
    <alternativeName>
        <fullName evidence="2">FMN-dependent NADH-azo compound oxidoreductase</fullName>
    </alternativeName>
    <alternativeName>
        <fullName evidence="2">FMN-dependent NADH-azoreductase</fullName>
        <ecNumber evidence="2">1.7.1.17</ecNumber>
    </alternativeName>
</protein>
<sequence length="200" mass="22112">MSKVLVLKSSIMAQHSHTNQMADFFIEKWQTNHADDSITVRDLTAQSIPALDNELVHALRPSGNEMTARQKETLALSDELIAELQDNDVIVITAPMYNFHIPTQLKSYFDMIARAGVTFRYTENGPEGLLKGKQVIILTSRGGIHKDGPSDLLVPYLRLFLSFIGLTDIEFVFTEGVALGPDAANQAQQTAREVLQAIAS</sequence>
<accession>Q7N511</accession>
<keyword id="KW-0285">Flavoprotein</keyword>
<keyword id="KW-0288">FMN</keyword>
<keyword id="KW-0520">NAD</keyword>
<keyword id="KW-0560">Oxidoreductase</keyword>
<keyword id="KW-1185">Reference proteome</keyword>
<dbReference type="EC" id="1.6.5.-" evidence="2"/>
<dbReference type="EC" id="1.7.1.17" evidence="2"/>
<dbReference type="EMBL" id="BX571866">
    <property type="protein sequence ID" value="CAE14442.1"/>
    <property type="molecule type" value="Genomic_DNA"/>
</dbReference>
<dbReference type="RefSeq" id="WP_011146403.1">
    <property type="nucleotide sequence ID" value="NC_005126.1"/>
</dbReference>
<dbReference type="SMR" id="Q7N511"/>
<dbReference type="STRING" id="243265.plu2149"/>
<dbReference type="GeneID" id="48848429"/>
<dbReference type="KEGG" id="plu:plu2149"/>
<dbReference type="eggNOG" id="COG1182">
    <property type="taxonomic scope" value="Bacteria"/>
</dbReference>
<dbReference type="HOGENOM" id="CLU_088964_0_0_6"/>
<dbReference type="OrthoDB" id="9787136at2"/>
<dbReference type="Proteomes" id="UP000002514">
    <property type="component" value="Chromosome"/>
</dbReference>
<dbReference type="GO" id="GO:0009055">
    <property type="term" value="F:electron transfer activity"/>
    <property type="evidence" value="ECO:0007669"/>
    <property type="project" value="UniProtKB-UniRule"/>
</dbReference>
<dbReference type="GO" id="GO:0010181">
    <property type="term" value="F:FMN binding"/>
    <property type="evidence" value="ECO:0007669"/>
    <property type="project" value="UniProtKB-UniRule"/>
</dbReference>
<dbReference type="GO" id="GO:0016652">
    <property type="term" value="F:oxidoreductase activity, acting on NAD(P)H as acceptor"/>
    <property type="evidence" value="ECO:0007669"/>
    <property type="project" value="UniProtKB-UniRule"/>
</dbReference>
<dbReference type="GO" id="GO:0016655">
    <property type="term" value="F:oxidoreductase activity, acting on NAD(P)H, quinone or similar compound as acceptor"/>
    <property type="evidence" value="ECO:0007669"/>
    <property type="project" value="InterPro"/>
</dbReference>
<dbReference type="Gene3D" id="3.40.50.360">
    <property type="match status" value="1"/>
</dbReference>
<dbReference type="HAMAP" id="MF_01216">
    <property type="entry name" value="Azoreductase_type1"/>
    <property type="match status" value="1"/>
</dbReference>
<dbReference type="InterPro" id="IPR003680">
    <property type="entry name" value="Flavodoxin_fold"/>
</dbReference>
<dbReference type="InterPro" id="IPR029039">
    <property type="entry name" value="Flavoprotein-like_sf"/>
</dbReference>
<dbReference type="InterPro" id="IPR050104">
    <property type="entry name" value="FMN-dep_NADH:Q_OxRdtase_AzoR1"/>
</dbReference>
<dbReference type="InterPro" id="IPR023048">
    <property type="entry name" value="NADH:quinone_OxRdtase_FMN_depd"/>
</dbReference>
<dbReference type="PANTHER" id="PTHR43741">
    <property type="entry name" value="FMN-DEPENDENT NADH-AZOREDUCTASE 1"/>
    <property type="match status" value="1"/>
</dbReference>
<dbReference type="PANTHER" id="PTHR43741:SF2">
    <property type="entry name" value="FMN-DEPENDENT NADH:QUINONE OXIDOREDUCTASE"/>
    <property type="match status" value="1"/>
</dbReference>
<dbReference type="Pfam" id="PF02525">
    <property type="entry name" value="Flavodoxin_2"/>
    <property type="match status" value="1"/>
</dbReference>
<dbReference type="SUPFAM" id="SSF52218">
    <property type="entry name" value="Flavoproteins"/>
    <property type="match status" value="1"/>
</dbReference>
<reference key="1">
    <citation type="journal article" date="2003" name="Nat. Biotechnol.">
        <title>The genome sequence of the entomopathogenic bacterium Photorhabdus luminescens.</title>
        <authorList>
            <person name="Duchaud E."/>
            <person name="Rusniok C."/>
            <person name="Frangeul L."/>
            <person name="Buchrieser C."/>
            <person name="Givaudan A."/>
            <person name="Taourit S."/>
            <person name="Bocs S."/>
            <person name="Boursaux-Eude C."/>
            <person name="Chandler M."/>
            <person name="Charles J.-F."/>
            <person name="Dassa E."/>
            <person name="Derose R."/>
            <person name="Derzelle S."/>
            <person name="Freyssinet G."/>
            <person name="Gaudriault S."/>
            <person name="Medigue C."/>
            <person name="Lanois A."/>
            <person name="Powell K."/>
            <person name="Siguier P."/>
            <person name="Vincent R."/>
            <person name="Wingate V."/>
            <person name="Zouine M."/>
            <person name="Glaser P."/>
            <person name="Boemare N."/>
            <person name="Danchin A."/>
            <person name="Kunst F."/>
        </authorList>
    </citation>
    <scope>NUCLEOTIDE SEQUENCE [LARGE SCALE GENOMIC DNA]</scope>
    <source>
        <strain>DSM 15139 / CIP 105565 / TT01</strain>
    </source>
</reference>
<name>AZOR_PHOLL</name>
<gene>
    <name evidence="2" type="primary">azoR</name>
    <name type="ordered locus">plu2149</name>
</gene>
<evidence type="ECO:0000250" key="1"/>
<evidence type="ECO:0000255" key="2">
    <source>
        <dbReference type="HAMAP-Rule" id="MF_01216"/>
    </source>
</evidence>
<organism>
    <name type="scientific">Photorhabdus laumondii subsp. laumondii (strain DSM 15139 / CIP 105565 / TT01)</name>
    <name type="common">Photorhabdus luminescens subsp. laumondii</name>
    <dbReference type="NCBI Taxonomy" id="243265"/>
    <lineage>
        <taxon>Bacteria</taxon>
        <taxon>Pseudomonadati</taxon>
        <taxon>Pseudomonadota</taxon>
        <taxon>Gammaproteobacteria</taxon>
        <taxon>Enterobacterales</taxon>
        <taxon>Morganellaceae</taxon>
        <taxon>Photorhabdus</taxon>
    </lineage>
</organism>